<comment type="function">
    <text evidence="1">One of the proteins required for the normal export of preproteins out of the cell cytoplasm. It is a molecular chaperone that binds to a subset of precursor proteins, maintaining them in a translocation-competent state. It also specifically binds to its receptor SecA.</text>
</comment>
<comment type="subunit">
    <text evidence="1">Homotetramer, a dimer of dimers. One homotetramer interacts with 1 SecA dimer.</text>
</comment>
<comment type="subcellular location">
    <subcellularLocation>
        <location evidence="1">Cytoplasm</location>
    </subcellularLocation>
</comment>
<comment type="similarity">
    <text evidence="1">Belongs to the SecB family.</text>
</comment>
<accession>Q5FG94</accession>
<evidence type="ECO:0000255" key="1">
    <source>
        <dbReference type="HAMAP-Rule" id="MF_00821"/>
    </source>
</evidence>
<sequence length="174" mass="19377">MSYKLDVKAQYIKDLSFENPNSPQIFVMMSKATPEINISVNVSSISLPVKADDQKSGTENLSSLYEVTLQVNAEARIQNTVAFICEIKYCGVFSIKSDTENNEIDLSHQEVKDMLLVAAPSILFPFVRELIARATSSSGFPPLMLDIVDFRTMYENQLKQGVGQNDNDNSVDNV</sequence>
<gene>
    <name evidence="1" type="primary">secB</name>
    <name type="ordered locus">ERGA_CDS_07740</name>
</gene>
<feature type="chain" id="PRO_0000055367" description="Protein-export protein SecB">
    <location>
        <begin position="1"/>
        <end position="174"/>
    </location>
</feature>
<organism>
    <name type="scientific">Ehrlichia ruminantium (strain Gardel)</name>
    <dbReference type="NCBI Taxonomy" id="302409"/>
    <lineage>
        <taxon>Bacteria</taxon>
        <taxon>Pseudomonadati</taxon>
        <taxon>Pseudomonadota</taxon>
        <taxon>Alphaproteobacteria</taxon>
        <taxon>Rickettsiales</taxon>
        <taxon>Anaplasmataceae</taxon>
        <taxon>Ehrlichia</taxon>
    </lineage>
</organism>
<reference key="1">
    <citation type="journal article" date="2006" name="J. Bacteriol.">
        <title>Comparative genomic analysis of three strains of Ehrlichia ruminantium reveals an active process of genome size plasticity.</title>
        <authorList>
            <person name="Frutos R."/>
            <person name="Viari A."/>
            <person name="Ferraz C."/>
            <person name="Morgat A."/>
            <person name="Eychenie S."/>
            <person name="Kandassamy Y."/>
            <person name="Chantal I."/>
            <person name="Bensaid A."/>
            <person name="Coissac E."/>
            <person name="Vachiery N."/>
            <person name="Demaille J."/>
            <person name="Martinez D."/>
        </authorList>
    </citation>
    <scope>NUCLEOTIDE SEQUENCE [LARGE SCALE GENOMIC DNA]</scope>
    <source>
        <strain>Gardel</strain>
    </source>
</reference>
<dbReference type="EMBL" id="CR925677">
    <property type="protein sequence ID" value="CAI28226.1"/>
    <property type="molecule type" value="Genomic_DNA"/>
</dbReference>
<dbReference type="RefSeq" id="WP_011255846.1">
    <property type="nucleotide sequence ID" value="NC_006831.1"/>
</dbReference>
<dbReference type="SMR" id="Q5FG94"/>
<dbReference type="KEGG" id="erg:ERGA_CDS_07740"/>
<dbReference type="HOGENOM" id="CLU_111574_0_0_5"/>
<dbReference type="OrthoDB" id="9795145at2"/>
<dbReference type="Proteomes" id="UP000000533">
    <property type="component" value="Chromosome"/>
</dbReference>
<dbReference type="GO" id="GO:0005737">
    <property type="term" value="C:cytoplasm"/>
    <property type="evidence" value="ECO:0007669"/>
    <property type="project" value="UniProtKB-SubCell"/>
</dbReference>
<dbReference type="GO" id="GO:0051082">
    <property type="term" value="F:unfolded protein binding"/>
    <property type="evidence" value="ECO:0007669"/>
    <property type="project" value="InterPro"/>
</dbReference>
<dbReference type="GO" id="GO:0006457">
    <property type="term" value="P:protein folding"/>
    <property type="evidence" value="ECO:0007669"/>
    <property type="project" value="UniProtKB-UniRule"/>
</dbReference>
<dbReference type="GO" id="GO:0051262">
    <property type="term" value="P:protein tetramerization"/>
    <property type="evidence" value="ECO:0007669"/>
    <property type="project" value="InterPro"/>
</dbReference>
<dbReference type="GO" id="GO:0015031">
    <property type="term" value="P:protein transport"/>
    <property type="evidence" value="ECO:0007669"/>
    <property type="project" value="UniProtKB-UniRule"/>
</dbReference>
<dbReference type="Gene3D" id="3.10.420.10">
    <property type="entry name" value="SecB-like"/>
    <property type="match status" value="1"/>
</dbReference>
<dbReference type="HAMAP" id="MF_00821">
    <property type="entry name" value="SecB"/>
    <property type="match status" value="1"/>
</dbReference>
<dbReference type="InterPro" id="IPR003708">
    <property type="entry name" value="SecB"/>
</dbReference>
<dbReference type="InterPro" id="IPR035958">
    <property type="entry name" value="SecB-like_sf"/>
</dbReference>
<dbReference type="NCBIfam" id="NF004392">
    <property type="entry name" value="PRK05751.1-3"/>
    <property type="match status" value="1"/>
</dbReference>
<dbReference type="NCBIfam" id="TIGR00809">
    <property type="entry name" value="secB"/>
    <property type="match status" value="1"/>
</dbReference>
<dbReference type="PANTHER" id="PTHR36918">
    <property type="match status" value="1"/>
</dbReference>
<dbReference type="PANTHER" id="PTHR36918:SF1">
    <property type="entry name" value="PROTEIN-EXPORT PROTEIN SECB"/>
    <property type="match status" value="1"/>
</dbReference>
<dbReference type="Pfam" id="PF02556">
    <property type="entry name" value="SecB"/>
    <property type="match status" value="1"/>
</dbReference>
<dbReference type="SUPFAM" id="SSF54611">
    <property type="entry name" value="SecB-like"/>
    <property type="match status" value="1"/>
</dbReference>
<proteinExistence type="inferred from homology"/>
<name>SECB_EHRRG</name>
<protein>
    <recommendedName>
        <fullName evidence="1">Protein-export protein SecB</fullName>
    </recommendedName>
</protein>
<keyword id="KW-0143">Chaperone</keyword>
<keyword id="KW-0963">Cytoplasm</keyword>
<keyword id="KW-0653">Protein transport</keyword>
<keyword id="KW-0811">Translocation</keyword>
<keyword id="KW-0813">Transport</keyword>